<protein>
    <recommendedName>
        <fullName evidence="1">ATP-dependent dethiobiotin synthetase BioD</fullName>
        <ecNumber evidence="1">6.3.3.3</ecNumber>
    </recommendedName>
    <alternativeName>
        <fullName evidence="1">DTB synthetase</fullName>
        <shortName evidence="1">DTBS</shortName>
    </alternativeName>
    <alternativeName>
        <fullName evidence="1">Dethiobiotin synthase</fullName>
    </alternativeName>
</protein>
<evidence type="ECO:0000255" key="1">
    <source>
        <dbReference type="HAMAP-Rule" id="MF_00336"/>
    </source>
</evidence>
<comment type="function">
    <text evidence="1">Catalyzes a mechanistically unusual reaction, the ATP-dependent insertion of CO2 between the N7 and N8 nitrogen atoms of 7,8-diaminopelargonic acid (DAPA, also called 7,8-diammoniononanoate) to form a ureido ring.</text>
</comment>
<comment type="catalytic activity">
    <reaction evidence="1">
        <text>(7R,8S)-7,8-diammoniononanoate + CO2 + ATP = (4R,5S)-dethiobiotin + ADP + phosphate + 3 H(+)</text>
        <dbReference type="Rhea" id="RHEA:15805"/>
        <dbReference type="ChEBI" id="CHEBI:15378"/>
        <dbReference type="ChEBI" id="CHEBI:16526"/>
        <dbReference type="ChEBI" id="CHEBI:30616"/>
        <dbReference type="ChEBI" id="CHEBI:43474"/>
        <dbReference type="ChEBI" id="CHEBI:149469"/>
        <dbReference type="ChEBI" id="CHEBI:149473"/>
        <dbReference type="ChEBI" id="CHEBI:456216"/>
        <dbReference type="EC" id="6.3.3.3"/>
    </reaction>
</comment>
<comment type="cofactor">
    <cofactor evidence="1">
        <name>Mg(2+)</name>
        <dbReference type="ChEBI" id="CHEBI:18420"/>
    </cofactor>
</comment>
<comment type="pathway">
    <text evidence="1">Cofactor biosynthesis; biotin biosynthesis; biotin from 7,8-diaminononanoate: step 1/2.</text>
</comment>
<comment type="subunit">
    <text evidence="1">Homodimer.</text>
</comment>
<comment type="subcellular location">
    <subcellularLocation>
        <location evidence="1">Cytoplasm</location>
    </subcellularLocation>
</comment>
<comment type="similarity">
    <text evidence="1">Belongs to the dethiobiotin synthetase family.</text>
</comment>
<organism>
    <name type="scientific">Clostridium botulinum (strain Kyoto / Type A2)</name>
    <dbReference type="NCBI Taxonomy" id="536232"/>
    <lineage>
        <taxon>Bacteria</taxon>
        <taxon>Bacillati</taxon>
        <taxon>Bacillota</taxon>
        <taxon>Clostridia</taxon>
        <taxon>Eubacteriales</taxon>
        <taxon>Clostridiaceae</taxon>
        <taxon>Clostridium</taxon>
    </lineage>
</organism>
<gene>
    <name evidence="1" type="primary">bioD</name>
    <name type="ordered locus">CLM_2467</name>
</gene>
<name>BIOD_CLOBJ</name>
<accession>C1FR34</accession>
<feature type="chain" id="PRO_1000133210" description="ATP-dependent dethiobiotin synthetase BioD">
    <location>
        <begin position="1"/>
        <end position="227"/>
    </location>
</feature>
<feature type="active site" evidence="1">
    <location>
        <position position="38"/>
    </location>
</feature>
<feature type="binding site" evidence="1">
    <location>
        <begin position="13"/>
        <end position="18"/>
    </location>
    <ligand>
        <name>ATP</name>
        <dbReference type="ChEBI" id="CHEBI:30616"/>
    </ligand>
</feature>
<feature type="binding site" evidence="1">
    <location>
        <position position="17"/>
    </location>
    <ligand>
        <name>Mg(2+)</name>
        <dbReference type="ChEBI" id="CHEBI:18420"/>
    </ligand>
</feature>
<feature type="binding site" evidence="1">
    <location>
        <position position="42"/>
    </location>
    <ligand>
        <name>substrate</name>
    </ligand>
</feature>
<feature type="binding site" evidence="1">
    <location>
        <position position="55"/>
    </location>
    <ligand>
        <name>ATP</name>
        <dbReference type="ChEBI" id="CHEBI:30616"/>
    </ligand>
</feature>
<feature type="binding site" evidence="1">
    <location>
        <position position="55"/>
    </location>
    <ligand>
        <name>Mg(2+)</name>
        <dbReference type="ChEBI" id="CHEBI:18420"/>
    </ligand>
</feature>
<feature type="binding site" evidence="1">
    <location>
        <begin position="116"/>
        <end position="119"/>
    </location>
    <ligand>
        <name>ATP</name>
        <dbReference type="ChEBI" id="CHEBI:30616"/>
    </ligand>
</feature>
<feature type="binding site" evidence="1">
    <location>
        <position position="116"/>
    </location>
    <ligand>
        <name>Mg(2+)</name>
        <dbReference type="ChEBI" id="CHEBI:18420"/>
    </ligand>
</feature>
<feature type="binding site" evidence="1">
    <location>
        <begin position="179"/>
        <end position="180"/>
    </location>
    <ligand>
        <name>ATP</name>
        <dbReference type="ChEBI" id="CHEBI:30616"/>
    </ligand>
</feature>
<reference key="1">
    <citation type="submission" date="2008-10" db="EMBL/GenBank/DDBJ databases">
        <title>Genome sequence of Clostridium botulinum A2 Kyoto.</title>
        <authorList>
            <person name="Shrivastava S."/>
            <person name="Brinkac L.M."/>
            <person name="Brown J.L."/>
            <person name="Bruce D."/>
            <person name="Detter C.C."/>
            <person name="Johnson E.A."/>
            <person name="Munk C.A."/>
            <person name="Smith L.A."/>
            <person name="Smith T.J."/>
            <person name="Sutton G."/>
            <person name="Brettin T.S."/>
        </authorList>
    </citation>
    <scope>NUCLEOTIDE SEQUENCE [LARGE SCALE GENOMIC DNA]</scope>
    <source>
        <strain>Kyoto / Type A2</strain>
    </source>
</reference>
<keyword id="KW-0067">ATP-binding</keyword>
<keyword id="KW-0093">Biotin biosynthesis</keyword>
<keyword id="KW-0963">Cytoplasm</keyword>
<keyword id="KW-0436">Ligase</keyword>
<keyword id="KW-0460">Magnesium</keyword>
<keyword id="KW-0479">Metal-binding</keyword>
<keyword id="KW-0547">Nucleotide-binding</keyword>
<sequence>MARGIFITATGTDIGKTYVTALIIKRLRETNINCGYYKAALSEAERRDGKLIAGDANYVYNIANIKGDPNDAVSYIFQQAVSPHLAAKLNNVEISMERIKKDFYSIKNKYDYITVEGSGGIVCPISTGKEKIMLDNIIKIFKLPAIVVADAGLGTINSTILTLQYMKEKNISVKMILLNNYNHEDIIHIENKGYLSDNLLIPVYTCNKNANNLEIPVEKLIEIYEEI</sequence>
<dbReference type="EC" id="6.3.3.3" evidence="1"/>
<dbReference type="EMBL" id="CP001581">
    <property type="protein sequence ID" value="ACO84860.1"/>
    <property type="molecule type" value="Genomic_DNA"/>
</dbReference>
<dbReference type="RefSeq" id="WP_012704454.1">
    <property type="nucleotide sequence ID" value="NC_012563.1"/>
</dbReference>
<dbReference type="SMR" id="C1FR34"/>
<dbReference type="KEGG" id="cby:CLM_2467"/>
<dbReference type="eggNOG" id="COG0132">
    <property type="taxonomic scope" value="Bacteria"/>
</dbReference>
<dbReference type="HOGENOM" id="CLU_072551_3_0_9"/>
<dbReference type="UniPathway" id="UPA00078">
    <property type="reaction ID" value="UER00161"/>
</dbReference>
<dbReference type="Proteomes" id="UP000001374">
    <property type="component" value="Chromosome"/>
</dbReference>
<dbReference type="GO" id="GO:0005829">
    <property type="term" value="C:cytosol"/>
    <property type="evidence" value="ECO:0007669"/>
    <property type="project" value="TreeGrafter"/>
</dbReference>
<dbReference type="GO" id="GO:0005524">
    <property type="term" value="F:ATP binding"/>
    <property type="evidence" value="ECO:0007669"/>
    <property type="project" value="UniProtKB-UniRule"/>
</dbReference>
<dbReference type="GO" id="GO:0004141">
    <property type="term" value="F:dethiobiotin synthase activity"/>
    <property type="evidence" value="ECO:0007669"/>
    <property type="project" value="UniProtKB-UniRule"/>
</dbReference>
<dbReference type="GO" id="GO:0000287">
    <property type="term" value="F:magnesium ion binding"/>
    <property type="evidence" value="ECO:0007669"/>
    <property type="project" value="UniProtKB-UniRule"/>
</dbReference>
<dbReference type="GO" id="GO:0009102">
    <property type="term" value="P:biotin biosynthetic process"/>
    <property type="evidence" value="ECO:0007669"/>
    <property type="project" value="UniProtKB-UniRule"/>
</dbReference>
<dbReference type="CDD" id="cd03109">
    <property type="entry name" value="DTBS"/>
    <property type="match status" value="1"/>
</dbReference>
<dbReference type="FunFam" id="3.40.50.300:FF:003305">
    <property type="entry name" value="ATP-dependent dethiobiotin synthetase BioD"/>
    <property type="match status" value="1"/>
</dbReference>
<dbReference type="Gene3D" id="3.40.50.300">
    <property type="entry name" value="P-loop containing nucleotide triphosphate hydrolases"/>
    <property type="match status" value="1"/>
</dbReference>
<dbReference type="HAMAP" id="MF_00336">
    <property type="entry name" value="BioD"/>
    <property type="match status" value="1"/>
</dbReference>
<dbReference type="InterPro" id="IPR004472">
    <property type="entry name" value="DTB_synth_BioD"/>
</dbReference>
<dbReference type="InterPro" id="IPR027417">
    <property type="entry name" value="P-loop_NTPase"/>
</dbReference>
<dbReference type="NCBIfam" id="TIGR00347">
    <property type="entry name" value="bioD"/>
    <property type="match status" value="1"/>
</dbReference>
<dbReference type="PANTHER" id="PTHR43210:SF2">
    <property type="entry name" value="ATP-DEPENDENT DETHIOBIOTIN SYNTHETASE BIOD 2"/>
    <property type="match status" value="1"/>
</dbReference>
<dbReference type="PANTHER" id="PTHR43210">
    <property type="entry name" value="DETHIOBIOTIN SYNTHETASE"/>
    <property type="match status" value="1"/>
</dbReference>
<dbReference type="Pfam" id="PF13500">
    <property type="entry name" value="AAA_26"/>
    <property type="match status" value="1"/>
</dbReference>
<dbReference type="PIRSF" id="PIRSF006755">
    <property type="entry name" value="DTB_synth"/>
    <property type="match status" value="1"/>
</dbReference>
<dbReference type="SUPFAM" id="SSF52540">
    <property type="entry name" value="P-loop containing nucleoside triphosphate hydrolases"/>
    <property type="match status" value="1"/>
</dbReference>
<proteinExistence type="inferred from homology"/>